<evidence type="ECO:0000255" key="1">
    <source>
        <dbReference type="HAMAP-Rule" id="MF_00248"/>
    </source>
</evidence>
<protein>
    <recommendedName>
        <fullName evidence="1">ATP-dependent protease subunit HslV</fullName>
        <ecNumber evidence="1">3.4.25.2</ecNumber>
    </recommendedName>
</protein>
<comment type="function">
    <text evidence="1">Protease subunit of a proteasome-like degradation complex believed to be a general protein degrading machinery.</text>
</comment>
<comment type="catalytic activity">
    <reaction evidence="1">
        <text>ATP-dependent cleavage of peptide bonds with broad specificity.</text>
        <dbReference type="EC" id="3.4.25.2"/>
    </reaction>
</comment>
<comment type="activity regulation">
    <text evidence="1">Allosterically activated by HslU binding.</text>
</comment>
<comment type="subunit">
    <text evidence="1">A double ring-shaped homohexamer of HslV is capped on each side by a ring-shaped HslU homohexamer. The assembly of the HslU/HslV complex is dependent on binding of ATP.</text>
</comment>
<comment type="subcellular location">
    <subcellularLocation>
        <location evidence="1">Cytoplasm</location>
    </subcellularLocation>
</comment>
<comment type="similarity">
    <text evidence="1">Belongs to the peptidase T1B family. HslV subfamily.</text>
</comment>
<keyword id="KW-0021">Allosteric enzyme</keyword>
<keyword id="KW-0963">Cytoplasm</keyword>
<keyword id="KW-0378">Hydrolase</keyword>
<keyword id="KW-0479">Metal-binding</keyword>
<keyword id="KW-0645">Protease</keyword>
<keyword id="KW-1185">Reference proteome</keyword>
<keyword id="KW-0915">Sodium</keyword>
<keyword id="KW-0888">Threonine protease</keyword>
<gene>
    <name evidence="1" type="primary">hslV</name>
    <name type="ordered locus">OB1549</name>
</gene>
<organism>
    <name type="scientific">Oceanobacillus iheyensis (strain DSM 14371 / CIP 107618 / JCM 11309 / KCTC 3954 / HTE831)</name>
    <dbReference type="NCBI Taxonomy" id="221109"/>
    <lineage>
        <taxon>Bacteria</taxon>
        <taxon>Bacillati</taxon>
        <taxon>Bacillota</taxon>
        <taxon>Bacilli</taxon>
        <taxon>Bacillales</taxon>
        <taxon>Bacillaceae</taxon>
        <taxon>Oceanobacillus</taxon>
    </lineage>
</organism>
<name>HSLV_OCEIH</name>
<feature type="chain" id="PRO_0000148127" description="ATP-dependent protease subunit HslV">
    <location>
        <begin position="1"/>
        <end position="181"/>
    </location>
</feature>
<feature type="active site" evidence="1">
    <location>
        <position position="8"/>
    </location>
</feature>
<feature type="binding site" evidence="1">
    <location>
        <position position="165"/>
    </location>
    <ligand>
        <name>Na(+)</name>
        <dbReference type="ChEBI" id="CHEBI:29101"/>
    </ligand>
</feature>
<feature type="binding site" evidence="1">
    <location>
        <position position="168"/>
    </location>
    <ligand>
        <name>Na(+)</name>
        <dbReference type="ChEBI" id="CHEBI:29101"/>
    </ligand>
</feature>
<feature type="binding site" evidence="1">
    <location>
        <position position="171"/>
    </location>
    <ligand>
        <name>Na(+)</name>
        <dbReference type="ChEBI" id="CHEBI:29101"/>
    </ligand>
</feature>
<reference key="1">
    <citation type="journal article" date="2002" name="Nucleic Acids Res.">
        <title>Genome sequence of Oceanobacillus iheyensis isolated from the Iheya Ridge and its unexpected adaptive capabilities to extreme environments.</title>
        <authorList>
            <person name="Takami H."/>
            <person name="Takaki Y."/>
            <person name="Uchiyama I."/>
        </authorList>
    </citation>
    <scope>NUCLEOTIDE SEQUENCE [LARGE SCALE GENOMIC DNA]</scope>
    <source>
        <strain>DSM 14371 / CIP 107618 / JCM 11309 / KCTC 3954 / HTE831</strain>
    </source>
</reference>
<sequence>MTMEMHATTIFAVQHQGQSAMCGDGQVTLGNSVVMKHKAKKVRTLYNGKVLAGFAGSVADAFTLFEKFETKLQSFNGNLTRASVELAQEWRSDKVLRKLEAMLIVMNKEHMYLVSGTGEVIEPDDGILAIGSGGNYALSAGRALVRYADNMSAADIARSALEVAGEICVFTNDQITLEVLE</sequence>
<proteinExistence type="inferred from homology"/>
<accession>Q8CXH2</accession>
<dbReference type="EC" id="3.4.25.2" evidence="1"/>
<dbReference type="EMBL" id="BA000028">
    <property type="protein sequence ID" value="BAC13505.1"/>
    <property type="molecule type" value="Genomic_DNA"/>
</dbReference>
<dbReference type="RefSeq" id="WP_011065949.1">
    <property type="nucleotide sequence ID" value="NC_004193.1"/>
</dbReference>
<dbReference type="SMR" id="Q8CXH2"/>
<dbReference type="STRING" id="221109.gene:10733789"/>
<dbReference type="MEROPS" id="T01.007"/>
<dbReference type="KEGG" id="oih:OB1549"/>
<dbReference type="eggNOG" id="COG5405">
    <property type="taxonomic scope" value="Bacteria"/>
</dbReference>
<dbReference type="HOGENOM" id="CLU_093872_1_1_9"/>
<dbReference type="OrthoDB" id="9804884at2"/>
<dbReference type="PhylomeDB" id="Q8CXH2"/>
<dbReference type="Proteomes" id="UP000000822">
    <property type="component" value="Chromosome"/>
</dbReference>
<dbReference type="GO" id="GO:0009376">
    <property type="term" value="C:HslUV protease complex"/>
    <property type="evidence" value="ECO:0007669"/>
    <property type="project" value="UniProtKB-UniRule"/>
</dbReference>
<dbReference type="GO" id="GO:0005839">
    <property type="term" value="C:proteasome core complex"/>
    <property type="evidence" value="ECO:0007669"/>
    <property type="project" value="InterPro"/>
</dbReference>
<dbReference type="GO" id="GO:0046872">
    <property type="term" value="F:metal ion binding"/>
    <property type="evidence" value="ECO:0007669"/>
    <property type="project" value="UniProtKB-KW"/>
</dbReference>
<dbReference type="GO" id="GO:0004298">
    <property type="term" value="F:threonine-type endopeptidase activity"/>
    <property type="evidence" value="ECO:0007669"/>
    <property type="project" value="UniProtKB-KW"/>
</dbReference>
<dbReference type="GO" id="GO:0051603">
    <property type="term" value="P:proteolysis involved in protein catabolic process"/>
    <property type="evidence" value="ECO:0007669"/>
    <property type="project" value="InterPro"/>
</dbReference>
<dbReference type="CDD" id="cd01913">
    <property type="entry name" value="protease_HslV"/>
    <property type="match status" value="1"/>
</dbReference>
<dbReference type="Gene3D" id="3.60.20.10">
    <property type="entry name" value="Glutamine Phosphoribosylpyrophosphate, subunit 1, domain 1"/>
    <property type="match status" value="1"/>
</dbReference>
<dbReference type="HAMAP" id="MF_00248">
    <property type="entry name" value="HslV"/>
    <property type="match status" value="1"/>
</dbReference>
<dbReference type="InterPro" id="IPR022281">
    <property type="entry name" value="ATP-dep_Prtase_HsIV_su"/>
</dbReference>
<dbReference type="InterPro" id="IPR029055">
    <property type="entry name" value="Ntn_hydrolases_N"/>
</dbReference>
<dbReference type="InterPro" id="IPR001353">
    <property type="entry name" value="Proteasome_sua/b"/>
</dbReference>
<dbReference type="InterPro" id="IPR023333">
    <property type="entry name" value="Proteasome_suB-type"/>
</dbReference>
<dbReference type="NCBIfam" id="TIGR03692">
    <property type="entry name" value="ATP_dep_HslV"/>
    <property type="match status" value="1"/>
</dbReference>
<dbReference type="NCBIfam" id="NF003964">
    <property type="entry name" value="PRK05456.1"/>
    <property type="match status" value="1"/>
</dbReference>
<dbReference type="PANTHER" id="PTHR32194:SF0">
    <property type="entry name" value="ATP-DEPENDENT PROTEASE SUBUNIT HSLV"/>
    <property type="match status" value="1"/>
</dbReference>
<dbReference type="PANTHER" id="PTHR32194">
    <property type="entry name" value="METALLOPROTEASE TLDD"/>
    <property type="match status" value="1"/>
</dbReference>
<dbReference type="Pfam" id="PF00227">
    <property type="entry name" value="Proteasome"/>
    <property type="match status" value="1"/>
</dbReference>
<dbReference type="PIRSF" id="PIRSF039093">
    <property type="entry name" value="HslV"/>
    <property type="match status" value="1"/>
</dbReference>
<dbReference type="SUPFAM" id="SSF56235">
    <property type="entry name" value="N-terminal nucleophile aminohydrolases (Ntn hydrolases)"/>
    <property type="match status" value="1"/>
</dbReference>
<dbReference type="PROSITE" id="PS51476">
    <property type="entry name" value="PROTEASOME_BETA_2"/>
    <property type="match status" value="1"/>
</dbReference>